<proteinExistence type="inferred from homology"/>
<protein>
    <recommendedName>
        <fullName evidence="1">Large ribosomal subunit protein bL35</fullName>
    </recommendedName>
    <alternativeName>
        <fullName evidence="3">50S ribosomal protein L35</fullName>
    </alternativeName>
</protein>
<evidence type="ECO:0000255" key="1">
    <source>
        <dbReference type="HAMAP-Rule" id="MF_00514"/>
    </source>
</evidence>
<evidence type="ECO:0000256" key="2">
    <source>
        <dbReference type="SAM" id="MobiDB-lite"/>
    </source>
</evidence>
<evidence type="ECO:0000305" key="3"/>
<accession>Q189N0</accession>
<organism>
    <name type="scientific">Clostridioides difficile (strain 630)</name>
    <name type="common">Peptoclostridium difficile</name>
    <dbReference type="NCBI Taxonomy" id="272563"/>
    <lineage>
        <taxon>Bacteria</taxon>
        <taxon>Bacillati</taxon>
        <taxon>Bacillota</taxon>
        <taxon>Clostridia</taxon>
        <taxon>Peptostreptococcales</taxon>
        <taxon>Peptostreptococcaceae</taxon>
        <taxon>Clostridioides</taxon>
    </lineage>
</organism>
<gene>
    <name evidence="1" type="primary">rpmI</name>
    <name type="ordered locus">CD630_06860</name>
</gene>
<keyword id="KW-1185">Reference proteome</keyword>
<keyword id="KW-0687">Ribonucleoprotein</keyword>
<keyword id="KW-0689">Ribosomal protein</keyword>
<sequence>MPKMKTHRGAAKRLKKTGTGKLKRAKAFKKHILTKKSAKTKMNLRKSTLVSDGDAKRIAQLLPY</sequence>
<comment type="similarity">
    <text evidence="1">Belongs to the bacterial ribosomal protein bL35 family.</text>
</comment>
<name>RL35_CLOD6</name>
<reference key="1">
    <citation type="journal article" date="2006" name="Nat. Genet.">
        <title>The multidrug-resistant human pathogen Clostridium difficile has a highly mobile, mosaic genome.</title>
        <authorList>
            <person name="Sebaihia M."/>
            <person name="Wren B.W."/>
            <person name="Mullany P."/>
            <person name="Fairweather N.F."/>
            <person name="Minton N."/>
            <person name="Stabler R."/>
            <person name="Thomson N.R."/>
            <person name="Roberts A.P."/>
            <person name="Cerdeno-Tarraga A.M."/>
            <person name="Wang H."/>
            <person name="Holden M.T.G."/>
            <person name="Wright A."/>
            <person name="Churcher C."/>
            <person name="Quail M.A."/>
            <person name="Baker S."/>
            <person name="Bason N."/>
            <person name="Brooks K."/>
            <person name="Chillingworth T."/>
            <person name="Cronin A."/>
            <person name="Davis P."/>
            <person name="Dowd L."/>
            <person name="Fraser A."/>
            <person name="Feltwell T."/>
            <person name="Hance Z."/>
            <person name="Holroyd S."/>
            <person name="Jagels K."/>
            <person name="Moule S."/>
            <person name="Mungall K."/>
            <person name="Price C."/>
            <person name="Rabbinowitsch E."/>
            <person name="Sharp S."/>
            <person name="Simmonds M."/>
            <person name="Stevens K."/>
            <person name="Unwin L."/>
            <person name="Whithead S."/>
            <person name="Dupuy B."/>
            <person name="Dougan G."/>
            <person name="Barrell B."/>
            <person name="Parkhill J."/>
        </authorList>
    </citation>
    <scope>NUCLEOTIDE SEQUENCE [LARGE SCALE GENOMIC DNA]</scope>
    <source>
        <strain>630</strain>
    </source>
</reference>
<feature type="chain" id="PRO_0000258660" description="Large ribosomal subunit protein bL35">
    <location>
        <begin position="1"/>
        <end position="64"/>
    </location>
</feature>
<feature type="region of interest" description="Disordered" evidence="2">
    <location>
        <begin position="1"/>
        <end position="25"/>
    </location>
</feature>
<dbReference type="EMBL" id="AM180355">
    <property type="protein sequence ID" value="CAJ67519.1"/>
    <property type="molecule type" value="Genomic_DNA"/>
</dbReference>
<dbReference type="RefSeq" id="WP_003429729.1">
    <property type="nucleotide sequence ID" value="NZ_JAUPES010000005.1"/>
</dbReference>
<dbReference type="RefSeq" id="YP_001087162.1">
    <property type="nucleotide sequence ID" value="NC_009089.1"/>
</dbReference>
<dbReference type="SMR" id="Q189N0"/>
<dbReference type="STRING" id="272563.CD630_06860"/>
<dbReference type="EnsemblBacteria" id="CAJ67519">
    <property type="protein sequence ID" value="CAJ67519"/>
    <property type="gene ID" value="CD630_06860"/>
</dbReference>
<dbReference type="GeneID" id="66353187"/>
<dbReference type="KEGG" id="cdf:CD630_06860"/>
<dbReference type="KEGG" id="pdc:CDIF630_00799"/>
<dbReference type="PATRIC" id="fig|272563.120.peg.705"/>
<dbReference type="eggNOG" id="COG0291">
    <property type="taxonomic scope" value="Bacteria"/>
</dbReference>
<dbReference type="OrthoDB" id="47476at2"/>
<dbReference type="PhylomeDB" id="Q189N0"/>
<dbReference type="BioCyc" id="PDIF272563:G12WB-795-MONOMER"/>
<dbReference type="Proteomes" id="UP000001978">
    <property type="component" value="Chromosome"/>
</dbReference>
<dbReference type="GO" id="GO:0022625">
    <property type="term" value="C:cytosolic large ribosomal subunit"/>
    <property type="evidence" value="ECO:0007669"/>
    <property type="project" value="TreeGrafter"/>
</dbReference>
<dbReference type="GO" id="GO:0003735">
    <property type="term" value="F:structural constituent of ribosome"/>
    <property type="evidence" value="ECO:0007669"/>
    <property type="project" value="InterPro"/>
</dbReference>
<dbReference type="GO" id="GO:0006412">
    <property type="term" value="P:translation"/>
    <property type="evidence" value="ECO:0007669"/>
    <property type="project" value="UniProtKB-UniRule"/>
</dbReference>
<dbReference type="FunFam" id="4.10.410.60:FF:000001">
    <property type="entry name" value="50S ribosomal protein L35"/>
    <property type="match status" value="1"/>
</dbReference>
<dbReference type="Gene3D" id="4.10.410.60">
    <property type="match status" value="1"/>
</dbReference>
<dbReference type="HAMAP" id="MF_00514">
    <property type="entry name" value="Ribosomal_bL35"/>
    <property type="match status" value="1"/>
</dbReference>
<dbReference type="InterPro" id="IPR001706">
    <property type="entry name" value="Ribosomal_bL35"/>
</dbReference>
<dbReference type="InterPro" id="IPR021137">
    <property type="entry name" value="Ribosomal_bL35-like"/>
</dbReference>
<dbReference type="InterPro" id="IPR037229">
    <property type="entry name" value="Ribosomal_bL35_sf"/>
</dbReference>
<dbReference type="NCBIfam" id="TIGR00001">
    <property type="entry name" value="rpmI_bact"/>
    <property type="match status" value="1"/>
</dbReference>
<dbReference type="PANTHER" id="PTHR33343">
    <property type="entry name" value="54S RIBOSOMAL PROTEIN BL35M"/>
    <property type="match status" value="1"/>
</dbReference>
<dbReference type="PANTHER" id="PTHR33343:SF1">
    <property type="entry name" value="LARGE RIBOSOMAL SUBUNIT PROTEIN BL35M"/>
    <property type="match status" value="1"/>
</dbReference>
<dbReference type="Pfam" id="PF01632">
    <property type="entry name" value="Ribosomal_L35p"/>
    <property type="match status" value="1"/>
</dbReference>
<dbReference type="PRINTS" id="PR00064">
    <property type="entry name" value="RIBOSOMALL35"/>
</dbReference>
<dbReference type="SUPFAM" id="SSF143034">
    <property type="entry name" value="L35p-like"/>
    <property type="match status" value="1"/>
</dbReference>